<gene>
    <name evidence="1" type="primary">ade1</name>
    <name type="ordered locus">Jann_0338</name>
</gene>
<protein>
    <recommendedName>
        <fullName evidence="1">Adenine deaminase 1</fullName>
        <shortName evidence="1">Adenase 1</shortName>
        <shortName evidence="1">Adenine aminase 1</shortName>
        <ecNumber evidence="1">3.5.4.2</ecNumber>
    </recommendedName>
</protein>
<proteinExistence type="inferred from homology"/>
<dbReference type="EC" id="3.5.4.2" evidence="1"/>
<dbReference type="EMBL" id="CP000264">
    <property type="protein sequence ID" value="ABD53255.1"/>
    <property type="status" value="ALT_INIT"/>
    <property type="molecule type" value="Genomic_DNA"/>
</dbReference>
<dbReference type="RefSeq" id="WP_044006214.1">
    <property type="nucleotide sequence ID" value="NC_007802.1"/>
</dbReference>
<dbReference type="SMR" id="Q28VK7"/>
<dbReference type="STRING" id="290400.Jann_0338"/>
<dbReference type="KEGG" id="jan:Jann_0338"/>
<dbReference type="eggNOG" id="COG1001">
    <property type="taxonomic scope" value="Bacteria"/>
</dbReference>
<dbReference type="HOGENOM" id="CLU_027935_0_0_5"/>
<dbReference type="OrthoDB" id="9775607at2"/>
<dbReference type="Proteomes" id="UP000008326">
    <property type="component" value="Chromosome"/>
</dbReference>
<dbReference type="GO" id="GO:0000034">
    <property type="term" value="F:adenine deaminase activity"/>
    <property type="evidence" value="ECO:0007669"/>
    <property type="project" value="UniProtKB-UniRule"/>
</dbReference>
<dbReference type="GO" id="GO:0006146">
    <property type="term" value="P:adenine catabolic process"/>
    <property type="evidence" value="ECO:0007669"/>
    <property type="project" value="InterPro"/>
</dbReference>
<dbReference type="CDD" id="cd01295">
    <property type="entry name" value="AdeC"/>
    <property type="match status" value="1"/>
</dbReference>
<dbReference type="Gene3D" id="3.20.20.140">
    <property type="entry name" value="Metal-dependent hydrolases"/>
    <property type="match status" value="1"/>
</dbReference>
<dbReference type="Gene3D" id="2.30.40.10">
    <property type="entry name" value="Urease, subunit C, domain 1"/>
    <property type="match status" value="1"/>
</dbReference>
<dbReference type="HAMAP" id="MF_01518">
    <property type="entry name" value="Adenine_deamin"/>
    <property type="match status" value="1"/>
</dbReference>
<dbReference type="InterPro" id="IPR006679">
    <property type="entry name" value="Adenine_deam"/>
</dbReference>
<dbReference type="InterPro" id="IPR026912">
    <property type="entry name" value="Adenine_deam_C"/>
</dbReference>
<dbReference type="InterPro" id="IPR006680">
    <property type="entry name" value="Amidohydro-rel"/>
</dbReference>
<dbReference type="InterPro" id="IPR011059">
    <property type="entry name" value="Metal-dep_hydrolase_composite"/>
</dbReference>
<dbReference type="InterPro" id="IPR032466">
    <property type="entry name" value="Metal_Hydrolase"/>
</dbReference>
<dbReference type="PANTHER" id="PTHR11113:SF2">
    <property type="entry name" value="ADENINE DEAMINASE"/>
    <property type="match status" value="1"/>
</dbReference>
<dbReference type="PANTHER" id="PTHR11113">
    <property type="entry name" value="N-ACETYLGLUCOSAMINE-6-PHOSPHATE DEACETYLASE"/>
    <property type="match status" value="1"/>
</dbReference>
<dbReference type="Pfam" id="PF13382">
    <property type="entry name" value="Adenine_deam_C"/>
    <property type="match status" value="1"/>
</dbReference>
<dbReference type="Pfam" id="PF01979">
    <property type="entry name" value="Amidohydro_1"/>
    <property type="match status" value="1"/>
</dbReference>
<dbReference type="SUPFAM" id="SSF51338">
    <property type="entry name" value="Composite domain of metallo-dependent hydrolases"/>
    <property type="match status" value="1"/>
</dbReference>
<dbReference type="SUPFAM" id="SSF51556">
    <property type="entry name" value="Metallo-dependent hydrolases"/>
    <property type="match status" value="1"/>
</dbReference>
<keyword id="KW-0378">Hydrolase</keyword>
<keyword id="KW-0464">Manganese</keyword>
<keyword id="KW-1185">Reference proteome</keyword>
<organism>
    <name type="scientific">Jannaschia sp. (strain CCS1)</name>
    <dbReference type="NCBI Taxonomy" id="290400"/>
    <lineage>
        <taxon>Bacteria</taxon>
        <taxon>Pseudomonadati</taxon>
        <taxon>Pseudomonadota</taxon>
        <taxon>Alphaproteobacteria</taxon>
        <taxon>Rhodobacterales</taxon>
        <taxon>Roseobacteraceae</taxon>
        <taxon>Jannaschia</taxon>
    </lineage>
</organism>
<reference key="1">
    <citation type="submission" date="2006-02" db="EMBL/GenBank/DDBJ databases">
        <title>Complete sequence of chromosome of Jannaschia sp. CCS1.</title>
        <authorList>
            <consortium name="US DOE Joint Genome Institute"/>
            <person name="Copeland A."/>
            <person name="Lucas S."/>
            <person name="Lapidus A."/>
            <person name="Barry K."/>
            <person name="Detter J.C."/>
            <person name="Glavina del Rio T."/>
            <person name="Hammon N."/>
            <person name="Israni S."/>
            <person name="Pitluck S."/>
            <person name="Brettin T."/>
            <person name="Bruce D."/>
            <person name="Han C."/>
            <person name="Tapia R."/>
            <person name="Gilna P."/>
            <person name="Chertkov O."/>
            <person name="Saunders E."/>
            <person name="Schmutz J."/>
            <person name="Larimer F."/>
            <person name="Land M."/>
            <person name="Kyrpides N."/>
            <person name="Lykidis A."/>
            <person name="Moran M.A."/>
            <person name="Belas R."/>
            <person name="Ye W."/>
            <person name="Buchan A."/>
            <person name="Gonzalez J.M."/>
            <person name="Schell M.A."/>
            <person name="Richardson P."/>
        </authorList>
    </citation>
    <scope>NUCLEOTIDE SEQUENCE [LARGE SCALE GENOMIC DNA]</scope>
    <source>
        <strain>CCS1</strain>
    </source>
</reference>
<name>ADEC1_JANSC</name>
<comment type="catalytic activity">
    <reaction evidence="1">
        <text>adenine + H2O + H(+) = hypoxanthine + NH4(+)</text>
        <dbReference type="Rhea" id="RHEA:23688"/>
        <dbReference type="ChEBI" id="CHEBI:15377"/>
        <dbReference type="ChEBI" id="CHEBI:15378"/>
        <dbReference type="ChEBI" id="CHEBI:16708"/>
        <dbReference type="ChEBI" id="CHEBI:17368"/>
        <dbReference type="ChEBI" id="CHEBI:28938"/>
        <dbReference type="EC" id="3.5.4.2"/>
    </reaction>
</comment>
<comment type="cofactor">
    <cofactor evidence="1">
        <name>Mn(2+)</name>
        <dbReference type="ChEBI" id="CHEBI:29035"/>
    </cofactor>
</comment>
<comment type="similarity">
    <text evidence="1">Belongs to the metallo-dependent hydrolases superfamily. Adenine deaminase family.</text>
</comment>
<comment type="sequence caution" evidence="2">
    <conflict type="erroneous initiation">
        <sequence resource="EMBL-CDS" id="ABD53255"/>
    </conflict>
</comment>
<evidence type="ECO:0000255" key="1">
    <source>
        <dbReference type="HAMAP-Rule" id="MF_01518"/>
    </source>
</evidence>
<evidence type="ECO:0000305" key="2"/>
<feature type="chain" id="PRO_0000292382" description="Adenine deaminase 1">
    <location>
        <begin position="1"/>
        <end position="594"/>
    </location>
</feature>
<accession>Q28VK7</accession>
<sequence>MEPTPFPSWQDVASALVATAAGRAPADLVIRGAKVVLVQTREVMDGWDVAIKHGRFAYVGPDASHCIGEDTQVEELSGHYLIPGLCDGHMHIESGMLTPAEFTRAVIPHGTTSMFTDPHEIANVFGLRGVRLMHDEALLQPINVFTQMPSCAPSAPGLETTGFEIGPDDVSEAMAWPGIVGLGEMMNFPGVVNGSQQMLAEIAATQAAGKTVGGHYASPDLGPAFHAYAAGGPADDHEGTSETDAMARMRQGMRSMIRLGSAWYDIESQITAITERGLDPRNMIICTDDCFAKTLVEDGHMNRAVRHAIDCGCDPLIALQMATINTATHFGLEREIGQIAPGRRADMIVTRDLRTLPIEVVYARGQRVAQFGECLVECPHLDWPTDTRHSVNLGKSLTAADFEIRSDAAEVTANVIGVVENQAPTKALTQTLPVRHGVVEPDGIAQIALVERHRGTGGVTNAFVSGFGYGPGMAMASTVAHDSHHMIVVGTDRAMMAKAAMRLGEVGGGITLWQDGTERALVELPIAGLMSDRPATEVAAKVTQLVEAMEAAGCTLNNAYMQHSLLALVVIPELRISDLGLVDVRTFELTPVLP</sequence>